<dbReference type="EMBL" id="CP000264">
    <property type="protein sequence ID" value="ABD52955.1"/>
    <property type="molecule type" value="Genomic_DNA"/>
</dbReference>
<dbReference type="RefSeq" id="WP_011453164.1">
    <property type="nucleotide sequence ID" value="NC_007802.1"/>
</dbReference>
<dbReference type="SMR" id="Q28WF7"/>
<dbReference type="STRING" id="290400.Jann_0038"/>
<dbReference type="KEGG" id="jan:Jann_0038"/>
<dbReference type="eggNOG" id="COG0532">
    <property type="taxonomic scope" value="Bacteria"/>
</dbReference>
<dbReference type="HOGENOM" id="CLU_006301_10_1_5"/>
<dbReference type="OrthoDB" id="9811804at2"/>
<dbReference type="Proteomes" id="UP000008326">
    <property type="component" value="Chromosome"/>
</dbReference>
<dbReference type="GO" id="GO:0005829">
    <property type="term" value="C:cytosol"/>
    <property type="evidence" value="ECO:0007669"/>
    <property type="project" value="TreeGrafter"/>
</dbReference>
<dbReference type="GO" id="GO:0005525">
    <property type="term" value="F:GTP binding"/>
    <property type="evidence" value="ECO:0007669"/>
    <property type="project" value="UniProtKB-KW"/>
</dbReference>
<dbReference type="GO" id="GO:0003924">
    <property type="term" value="F:GTPase activity"/>
    <property type="evidence" value="ECO:0007669"/>
    <property type="project" value="UniProtKB-UniRule"/>
</dbReference>
<dbReference type="GO" id="GO:0003743">
    <property type="term" value="F:translation initiation factor activity"/>
    <property type="evidence" value="ECO:0007669"/>
    <property type="project" value="UniProtKB-UniRule"/>
</dbReference>
<dbReference type="CDD" id="cd01887">
    <property type="entry name" value="IF2_eIF5B"/>
    <property type="match status" value="1"/>
</dbReference>
<dbReference type="CDD" id="cd03702">
    <property type="entry name" value="IF2_mtIF2_II"/>
    <property type="match status" value="1"/>
</dbReference>
<dbReference type="CDD" id="cd03692">
    <property type="entry name" value="mtIF2_IVc"/>
    <property type="match status" value="1"/>
</dbReference>
<dbReference type="FunFam" id="2.40.30.10:FF:000007">
    <property type="entry name" value="Translation initiation factor IF-2"/>
    <property type="match status" value="1"/>
</dbReference>
<dbReference type="FunFam" id="2.40.30.10:FF:000008">
    <property type="entry name" value="Translation initiation factor IF-2"/>
    <property type="match status" value="1"/>
</dbReference>
<dbReference type="FunFam" id="3.40.50.10050:FF:000001">
    <property type="entry name" value="Translation initiation factor IF-2"/>
    <property type="match status" value="1"/>
</dbReference>
<dbReference type="FunFam" id="3.40.50.300:FF:000019">
    <property type="entry name" value="Translation initiation factor IF-2"/>
    <property type="match status" value="1"/>
</dbReference>
<dbReference type="Gene3D" id="3.40.50.300">
    <property type="entry name" value="P-loop containing nucleotide triphosphate hydrolases"/>
    <property type="match status" value="1"/>
</dbReference>
<dbReference type="Gene3D" id="2.40.30.10">
    <property type="entry name" value="Translation factors"/>
    <property type="match status" value="2"/>
</dbReference>
<dbReference type="Gene3D" id="3.40.50.10050">
    <property type="entry name" value="Translation initiation factor IF- 2, domain 3"/>
    <property type="match status" value="1"/>
</dbReference>
<dbReference type="HAMAP" id="MF_00100_B">
    <property type="entry name" value="IF_2_B"/>
    <property type="match status" value="1"/>
</dbReference>
<dbReference type="InterPro" id="IPR053905">
    <property type="entry name" value="EF-G-like_DII"/>
</dbReference>
<dbReference type="InterPro" id="IPR013575">
    <property type="entry name" value="IF2_assoc_dom_bac"/>
</dbReference>
<dbReference type="InterPro" id="IPR044145">
    <property type="entry name" value="IF2_II"/>
</dbReference>
<dbReference type="InterPro" id="IPR006847">
    <property type="entry name" value="IF2_N"/>
</dbReference>
<dbReference type="InterPro" id="IPR027417">
    <property type="entry name" value="P-loop_NTPase"/>
</dbReference>
<dbReference type="InterPro" id="IPR005225">
    <property type="entry name" value="Small_GTP-bd"/>
</dbReference>
<dbReference type="InterPro" id="IPR000795">
    <property type="entry name" value="T_Tr_GTP-bd_dom"/>
</dbReference>
<dbReference type="InterPro" id="IPR000178">
    <property type="entry name" value="TF_IF2_bacterial-like"/>
</dbReference>
<dbReference type="InterPro" id="IPR015760">
    <property type="entry name" value="TIF_IF2"/>
</dbReference>
<dbReference type="InterPro" id="IPR023115">
    <property type="entry name" value="TIF_IF2_dom3"/>
</dbReference>
<dbReference type="InterPro" id="IPR036925">
    <property type="entry name" value="TIF_IF2_dom3_sf"/>
</dbReference>
<dbReference type="InterPro" id="IPR009000">
    <property type="entry name" value="Transl_B-barrel_sf"/>
</dbReference>
<dbReference type="NCBIfam" id="TIGR00487">
    <property type="entry name" value="IF-2"/>
    <property type="match status" value="1"/>
</dbReference>
<dbReference type="NCBIfam" id="TIGR00231">
    <property type="entry name" value="small_GTP"/>
    <property type="match status" value="1"/>
</dbReference>
<dbReference type="PANTHER" id="PTHR43381:SF5">
    <property type="entry name" value="TR-TYPE G DOMAIN-CONTAINING PROTEIN"/>
    <property type="match status" value="1"/>
</dbReference>
<dbReference type="PANTHER" id="PTHR43381">
    <property type="entry name" value="TRANSLATION INITIATION FACTOR IF-2-RELATED"/>
    <property type="match status" value="1"/>
</dbReference>
<dbReference type="Pfam" id="PF22042">
    <property type="entry name" value="EF-G_D2"/>
    <property type="match status" value="1"/>
</dbReference>
<dbReference type="Pfam" id="PF00009">
    <property type="entry name" value="GTP_EFTU"/>
    <property type="match status" value="1"/>
</dbReference>
<dbReference type="Pfam" id="PF11987">
    <property type="entry name" value="IF-2"/>
    <property type="match status" value="1"/>
</dbReference>
<dbReference type="Pfam" id="PF08364">
    <property type="entry name" value="IF2_assoc"/>
    <property type="match status" value="1"/>
</dbReference>
<dbReference type="Pfam" id="PF04760">
    <property type="entry name" value="IF2_N"/>
    <property type="match status" value="1"/>
</dbReference>
<dbReference type="SUPFAM" id="SSF52156">
    <property type="entry name" value="Initiation factor IF2/eIF5b, domain 3"/>
    <property type="match status" value="1"/>
</dbReference>
<dbReference type="SUPFAM" id="SSF52540">
    <property type="entry name" value="P-loop containing nucleoside triphosphate hydrolases"/>
    <property type="match status" value="1"/>
</dbReference>
<dbReference type="SUPFAM" id="SSF50447">
    <property type="entry name" value="Translation proteins"/>
    <property type="match status" value="2"/>
</dbReference>
<dbReference type="PROSITE" id="PS51722">
    <property type="entry name" value="G_TR_2"/>
    <property type="match status" value="1"/>
</dbReference>
<dbReference type="PROSITE" id="PS01176">
    <property type="entry name" value="IF2"/>
    <property type="match status" value="1"/>
</dbReference>
<evidence type="ECO:0000250" key="1"/>
<evidence type="ECO:0000255" key="2">
    <source>
        <dbReference type="HAMAP-Rule" id="MF_00100"/>
    </source>
</evidence>
<evidence type="ECO:0000256" key="3">
    <source>
        <dbReference type="SAM" id="MobiDB-lite"/>
    </source>
</evidence>
<protein>
    <recommendedName>
        <fullName evidence="2">Translation initiation factor IF-2</fullName>
    </recommendedName>
</protein>
<accession>Q28WF7</accession>
<keyword id="KW-0963">Cytoplasm</keyword>
<keyword id="KW-0342">GTP-binding</keyword>
<keyword id="KW-0396">Initiation factor</keyword>
<keyword id="KW-0547">Nucleotide-binding</keyword>
<keyword id="KW-0648">Protein biosynthesis</keyword>
<keyword id="KW-1185">Reference proteome</keyword>
<feature type="chain" id="PRO_1000008256" description="Translation initiation factor IF-2">
    <location>
        <begin position="1"/>
        <end position="824"/>
    </location>
</feature>
<feature type="domain" description="tr-type G">
    <location>
        <begin position="321"/>
        <end position="491"/>
    </location>
</feature>
<feature type="region of interest" description="Disordered" evidence="3">
    <location>
        <begin position="1"/>
        <end position="234"/>
    </location>
</feature>
<feature type="region of interest" description="G1" evidence="1">
    <location>
        <begin position="330"/>
        <end position="337"/>
    </location>
</feature>
<feature type="region of interest" description="G2" evidence="1">
    <location>
        <begin position="355"/>
        <end position="359"/>
    </location>
</feature>
<feature type="region of interest" description="G3" evidence="1">
    <location>
        <begin position="377"/>
        <end position="380"/>
    </location>
</feature>
<feature type="region of interest" description="G4" evidence="1">
    <location>
        <begin position="431"/>
        <end position="434"/>
    </location>
</feature>
<feature type="region of interest" description="G5" evidence="1">
    <location>
        <begin position="467"/>
        <end position="469"/>
    </location>
</feature>
<feature type="compositionally biased region" description="Basic and acidic residues" evidence="3">
    <location>
        <begin position="59"/>
        <end position="75"/>
    </location>
</feature>
<feature type="compositionally biased region" description="Basic and acidic residues" evidence="3">
    <location>
        <begin position="82"/>
        <end position="144"/>
    </location>
</feature>
<feature type="compositionally biased region" description="Low complexity" evidence="3">
    <location>
        <begin position="145"/>
        <end position="159"/>
    </location>
</feature>
<feature type="compositionally biased region" description="Basic and acidic residues" evidence="3">
    <location>
        <begin position="170"/>
        <end position="186"/>
    </location>
</feature>
<feature type="binding site" evidence="2">
    <location>
        <begin position="330"/>
        <end position="337"/>
    </location>
    <ligand>
        <name>GTP</name>
        <dbReference type="ChEBI" id="CHEBI:37565"/>
    </ligand>
</feature>
<feature type="binding site" evidence="2">
    <location>
        <begin position="377"/>
        <end position="381"/>
    </location>
    <ligand>
        <name>GTP</name>
        <dbReference type="ChEBI" id="CHEBI:37565"/>
    </ligand>
</feature>
<feature type="binding site" evidence="2">
    <location>
        <begin position="431"/>
        <end position="434"/>
    </location>
    <ligand>
        <name>GTP</name>
        <dbReference type="ChEBI" id="CHEBI:37565"/>
    </ligand>
</feature>
<reference key="1">
    <citation type="submission" date="2006-02" db="EMBL/GenBank/DDBJ databases">
        <title>Complete sequence of chromosome of Jannaschia sp. CCS1.</title>
        <authorList>
            <consortium name="US DOE Joint Genome Institute"/>
            <person name="Copeland A."/>
            <person name="Lucas S."/>
            <person name="Lapidus A."/>
            <person name="Barry K."/>
            <person name="Detter J.C."/>
            <person name="Glavina del Rio T."/>
            <person name="Hammon N."/>
            <person name="Israni S."/>
            <person name="Pitluck S."/>
            <person name="Brettin T."/>
            <person name="Bruce D."/>
            <person name="Han C."/>
            <person name="Tapia R."/>
            <person name="Gilna P."/>
            <person name="Chertkov O."/>
            <person name="Saunders E."/>
            <person name="Schmutz J."/>
            <person name="Larimer F."/>
            <person name="Land M."/>
            <person name="Kyrpides N."/>
            <person name="Lykidis A."/>
            <person name="Moran M.A."/>
            <person name="Belas R."/>
            <person name="Ye W."/>
            <person name="Buchan A."/>
            <person name="Gonzalez J.M."/>
            <person name="Schell M.A."/>
            <person name="Richardson P."/>
        </authorList>
    </citation>
    <scope>NUCLEOTIDE SEQUENCE [LARGE SCALE GENOMIC DNA]</scope>
    <source>
        <strain>CCS1</strain>
    </source>
</reference>
<name>IF2_JANSC</name>
<proteinExistence type="inferred from homology"/>
<gene>
    <name evidence="2" type="primary">infB</name>
    <name type="ordered locus">Jann_0038</name>
</gene>
<sequence>MSDQDGKKPLGLSGGARSGRVNQSFSRGRTKSVVVETKRKRVMVPKPGAPSAAAQNAEGGKRDKSVPDAEMDRRLKALQAAKARESQEAEERVKAEREREEERNRRRADAEAKEREEREREEALKAKEEEDDRRKAEEEARRNAPPEAAAPAVDPAAAATPRGGGKAAPARREPERDNKRENRSRGNDGGGRRAGKLTVNQAMSGGEGGRQRSMAAMKRKQERQRQKAMGGSVDREKVIRDVKVPETIIVAELANRMSERVGDVVKALMNNGMMITQNQPIDADTAELIIEEFGHRVQRVSDADVEQVIDTVEDDEGKLLPRPPVITIMGHVDHGKTSLLDRIRQANVVSGEAGGITQHIGAYQVTTESGAVLSFLDTPGHAAFTSMRARGAQVTDIVVLVVAADDAVMPQTIEAIAHAKAAEVPMIVAINKIDRPAADPQKVRTDLLQHEVIVEAMSGEVQDVEVSAMTGQGLPELLEAIALQAELLELKANPDRAAQGAVIEAQLDVGRGPVATVLVEKGTLRQGDIFVVGEQWGKVRALVNDQGDRVKDAGPSVPVEVLGLNGTPEAGDVLNVVETEAQAREIAEYREQAAKDKRAAAGAATTLDQLLANAKADENVRELQVVMKADVQGSAEAIVQALEKIGNDEVRVRVLHYGVGAITESDIGLAEASGTPVIGFNVRANAPARNAANQKGVEIRYYSVIYDLVDDVKAAASGLLGAEIRENFIGYANIKEVFKVSGVGNVAGCLVTEGVARRSAGVRLLRDDVVIHEGTLKTLKRFKDEVKEVQSGQECGMAFENYEDIRPDDVIEIFEREEVERSLT</sequence>
<comment type="function">
    <text evidence="2">One of the essential components for the initiation of protein synthesis. Protects formylmethionyl-tRNA from spontaneous hydrolysis and promotes its binding to the 30S ribosomal subunits. Also involved in the hydrolysis of GTP during the formation of the 70S ribosomal complex.</text>
</comment>
<comment type="subcellular location">
    <subcellularLocation>
        <location evidence="2">Cytoplasm</location>
    </subcellularLocation>
</comment>
<comment type="similarity">
    <text evidence="2">Belongs to the TRAFAC class translation factor GTPase superfamily. Classic translation factor GTPase family. IF-2 subfamily.</text>
</comment>
<organism>
    <name type="scientific">Jannaschia sp. (strain CCS1)</name>
    <dbReference type="NCBI Taxonomy" id="290400"/>
    <lineage>
        <taxon>Bacteria</taxon>
        <taxon>Pseudomonadati</taxon>
        <taxon>Pseudomonadota</taxon>
        <taxon>Alphaproteobacteria</taxon>
        <taxon>Rhodobacterales</taxon>
        <taxon>Roseobacteraceae</taxon>
        <taxon>Jannaschia</taxon>
    </lineage>
</organism>